<dbReference type="EMBL" id="AE004437">
    <property type="protein sequence ID" value="AAG20374.1"/>
    <property type="molecule type" value="Genomic_DNA"/>
</dbReference>
<dbReference type="PIR" id="B84376">
    <property type="entry name" value="B84376"/>
</dbReference>
<dbReference type="RefSeq" id="WP_010903675.1">
    <property type="nucleotide sequence ID" value="NC_002607.1"/>
</dbReference>
<dbReference type="STRING" id="64091.VNG_2254C"/>
<dbReference type="PaxDb" id="64091-VNG_2254C"/>
<dbReference type="GeneID" id="68694805"/>
<dbReference type="KEGG" id="hal:VNG_2254C"/>
<dbReference type="PATRIC" id="fig|64091.14.peg.1734"/>
<dbReference type="HOGENOM" id="CLU_052778_0_0_2"/>
<dbReference type="InParanoid" id="Q9HN47"/>
<dbReference type="OrthoDB" id="46081at2157"/>
<dbReference type="PhylomeDB" id="Q9HN47"/>
<dbReference type="Proteomes" id="UP000000554">
    <property type="component" value="Chromosome"/>
</dbReference>
<dbReference type="GO" id="GO:1990077">
    <property type="term" value="C:primosome complex"/>
    <property type="evidence" value="ECO:0007669"/>
    <property type="project" value="UniProtKB-KW"/>
</dbReference>
<dbReference type="GO" id="GO:0051539">
    <property type="term" value="F:4 iron, 4 sulfur cluster binding"/>
    <property type="evidence" value="ECO:0007669"/>
    <property type="project" value="UniProtKB-UniRule"/>
</dbReference>
<dbReference type="GO" id="GO:0003899">
    <property type="term" value="F:DNA-directed RNA polymerase activity"/>
    <property type="evidence" value="ECO:0007669"/>
    <property type="project" value="InterPro"/>
</dbReference>
<dbReference type="GO" id="GO:0046872">
    <property type="term" value="F:metal ion binding"/>
    <property type="evidence" value="ECO:0007669"/>
    <property type="project" value="UniProtKB-KW"/>
</dbReference>
<dbReference type="GO" id="GO:0006270">
    <property type="term" value="P:DNA replication initiation"/>
    <property type="evidence" value="ECO:0000318"/>
    <property type="project" value="GO_Central"/>
</dbReference>
<dbReference type="GO" id="GO:0006269">
    <property type="term" value="P:DNA replication, synthesis of primer"/>
    <property type="evidence" value="ECO:0000318"/>
    <property type="project" value="GO_Central"/>
</dbReference>
<dbReference type="CDD" id="cd06560">
    <property type="entry name" value="PriL"/>
    <property type="match status" value="1"/>
</dbReference>
<dbReference type="HAMAP" id="MF_00701">
    <property type="entry name" value="DNA_primase_lrg_arc"/>
    <property type="match status" value="1"/>
</dbReference>
<dbReference type="InterPro" id="IPR007238">
    <property type="entry name" value="DNA_primase_lsu_euk/arc"/>
</dbReference>
<dbReference type="InterPro" id="IPR023642">
    <property type="entry name" value="DNA_primase_lsu_PriL"/>
</dbReference>
<dbReference type="NCBIfam" id="NF002590">
    <property type="entry name" value="PRK02249.1-4"/>
    <property type="match status" value="1"/>
</dbReference>
<dbReference type="PANTHER" id="PTHR10537">
    <property type="entry name" value="DNA PRIMASE LARGE SUBUNIT"/>
    <property type="match status" value="1"/>
</dbReference>
<dbReference type="PANTHER" id="PTHR10537:SF3">
    <property type="entry name" value="DNA PRIMASE LARGE SUBUNIT"/>
    <property type="match status" value="1"/>
</dbReference>
<dbReference type="Pfam" id="PF04104">
    <property type="entry name" value="DNA_primase_lrg"/>
    <property type="match status" value="1"/>
</dbReference>
<dbReference type="SUPFAM" id="SSF140914">
    <property type="entry name" value="PriB N-terminal domain-like"/>
    <property type="match status" value="1"/>
</dbReference>
<proteinExistence type="inferred from homology"/>
<protein>
    <recommendedName>
        <fullName evidence="1">DNA primase large subunit PriL</fullName>
    </recommendedName>
</protein>
<organism>
    <name type="scientific">Halobacterium salinarum (strain ATCC 700922 / JCM 11081 / NRC-1)</name>
    <name type="common">Halobacterium halobium</name>
    <dbReference type="NCBI Taxonomy" id="64091"/>
    <lineage>
        <taxon>Archaea</taxon>
        <taxon>Methanobacteriati</taxon>
        <taxon>Methanobacteriota</taxon>
        <taxon>Stenosarchaea group</taxon>
        <taxon>Halobacteria</taxon>
        <taxon>Halobacteriales</taxon>
        <taxon>Halobacteriaceae</taxon>
        <taxon>Halobacterium</taxon>
        <taxon>Halobacterium salinarum NRC-34001</taxon>
    </lineage>
</organism>
<keyword id="KW-0004">4Fe-4S</keyword>
<keyword id="KW-0235">DNA replication</keyword>
<keyword id="KW-0408">Iron</keyword>
<keyword id="KW-0411">Iron-sulfur</keyword>
<keyword id="KW-0479">Metal-binding</keyword>
<keyword id="KW-0639">Primosome</keyword>
<keyword id="KW-1185">Reference proteome</keyword>
<comment type="function">
    <text evidence="1">Regulatory subunit of DNA primase, an RNA polymerase that catalyzes the synthesis of short RNA molecules used as primers for DNA polymerase during DNA replication. Stabilizes and modulates the activity of the small subunit, increasing the rate of DNA synthesis, and conferring RNA synthesis capability. The DNA polymerase activity may enable DNA primase to also catalyze primer extension after primer synthesis. May also play a role in DNA repair.</text>
</comment>
<comment type="cofactor">
    <cofactor evidence="1">
        <name>[4Fe-4S] cluster</name>
        <dbReference type="ChEBI" id="CHEBI:49883"/>
    </cofactor>
    <text evidence="1">Binds 1 [4Fe-4S] cluster.</text>
</comment>
<comment type="subunit">
    <text evidence="1">Heterodimer of a small subunit (PriS) and a large subunit (PriL).</text>
</comment>
<comment type="similarity">
    <text evidence="1">Belongs to the eukaryotic-type primase large subunit family.</text>
</comment>
<reference key="1">
    <citation type="journal article" date="2000" name="Proc. Natl. Acad. Sci. U.S.A.">
        <title>Genome sequence of Halobacterium species NRC-1.</title>
        <authorList>
            <person name="Ng W.V."/>
            <person name="Kennedy S.P."/>
            <person name="Mahairas G.G."/>
            <person name="Berquist B."/>
            <person name="Pan M."/>
            <person name="Shukla H.D."/>
            <person name="Lasky S.R."/>
            <person name="Baliga N.S."/>
            <person name="Thorsson V."/>
            <person name="Sbrogna J."/>
            <person name="Swartzell S."/>
            <person name="Weir D."/>
            <person name="Hall J."/>
            <person name="Dahl T.A."/>
            <person name="Welti R."/>
            <person name="Goo Y.A."/>
            <person name="Leithauser B."/>
            <person name="Keller K."/>
            <person name="Cruz R."/>
            <person name="Danson M.J."/>
            <person name="Hough D.W."/>
            <person name="Maddocks D.G."/>
            <person name="Jablonski P.E."/>
            <person name="Krebs M.P."/>
            <person name="Angevine C.M."/>
            <person name="Dale H."/>
            <person name="Isenbarger T.A."/>
            <person name="Peck R.F."/>
            <person name="Pohlschroder M."/>
            <person name="Spudich J.L."/>
            <person name="Jung K.-H."/>
            <person name="Alam M."/>
            <person name="Freitas T."/>
            <person name="Hou S."/>
            <person name="Daniels C.J."/>
            <person name="Dennis P.P."/>
            <person name="Omer A.D."/>
            <person name="Ebhardt H."/>
            <person name="Lowe T.M."/>
            <person name="Liang P."/>
            <person name="Riley M."/>
            <person name="Hood L."/>
            <person name="DasSarma S."/>
        </authorList>
    </citation>
    <scope>NUCLEOTIDE SEQUENCE [LARGE SCALE GENOMIC DNA]</scope>
    <source>
        <strain>ATCC 700922 / JCM 11081 / NRC-1</strain>
    </source>
</reference>
<gene>
    <name evidence="1" type="primary">priL</name>
    <name type="synonym">priB</name>
    <name type="ordered locus">VNG_2254C</name>
</gene>
<name>PRIL_HALSA</name>
<accession>Q9HN47</accession>
<evidence type="ECO:0000255" key="1">
    <source>
        <dbReference type="HAMAP-Rule" id="MF_00701"/>
    </source>
</evidence>
<evidence type="ECO:0000256" key="2">
    <source>
        <dbReference type="SAM" id="MobiDB-lite"/>
    </source>
</evidence>
<feature type="chain" id="PRO_0000046779" description="DNA primase large subunit PriL">
    <location>
        <begin position="1"/>
        <end position="360"/>
    </location>
</feature>
<feature type="region of interest" description="Disordered" evidence="2">
    <location>
        <begin position="340"/>
        <end position="360"/>
    </location>
</feature>
<feature type="binding site" evidence="1">
    <location>
        <position position="237"/>
    </location>
    <ligand>
        <name>[4Fe-4S] cluster</name>
        <dbReference type="ChEBI" id="CHEBI:49883"/>
    </ligand>
</feature>
<feature type="binding site" evidence="1">
    <location>
        <position position="309"/>
    </location>
    <ligand>
        <name>[4Fe-4S] cluster</name>
        <dbReference type="ChEBI" id="CHEBI:49883"/>
    </ligand>
</feature>
<feature type="binding site" evidence="1">
    <location>
        <position position="318"/>
    </location>
    <ligand>
        <name>[4Fe-4S] cluster</name>
        <dbReference type="ChEBI" id="CHEBI:49883"/>
    </ligand>
</feature>
<feature type="binding site" evidence="1">
    <location>
        <position position="325"/>
    </location>
    <ligand>
        <name>[4Fe-4S] cluster</name>
        <dbReference type="ChEBI" id="CHEBI:49883"/>
    </ligand>
</feature>
<sequence>MNARHARYPFLGDARDAVEEAGVDLARVVTEDDAVVERARERVVSALTDGTIGEPAATVSTRVEVLSYPVARVLVSIVDESVLVRKYATAEADAAYDRFTADESTDTDLKSVSDTTRVSRDTLLSEFDLRAHVHATPDAHTVDVPTYLLLASSLRDDDWRLVNRALDDGRVPVTDAELDTLIREAIRERVADGLPLSVPDQIADALDEPVAAIQDALADLDLTREIDTVVPELFPPCMKHLLDQVQRGDHLPHHARFAITSFLSNVGLSTDEIVDIYEVNPGFGEEMTRYQTDHIQGDSSPTEYTAPSCATMKAYGNCVNPDDLCDAINHPLSYYEVKLDDGDDDDLADWRDREDDDSPD</sequence>